<comment type="function">
    <text evidence="1">Part of the Sec protein translocase complex. Interacts with the SecYEG preprotein conducting channel. Has a central role in coupling the hydrolysis of ATP to the transfer of proteins into and across the cell membrane, serving both as a receptor for the preprotein-SecB complex and as an ATP-driven molecular motor driving the stepwise translocation of polypeptide chains across the membrane.</text>
</comment>
<comment type="catalytic activity">
    <reaction evidence="1">
        <text>ATP + H2O + cellular proteinSide 1 = ADP + phosphate + cellular proteinSide 2.</text>
        <dbReference type="EC" id="7.4.2.8"/>
    </reaction>
</comment>
<comment type="cofactor">
    <cofactor evidence="1">
        <name>Zn(2+)</name>
        <dbReference type="ChEBI" id="CHEBI:29105"/>
    </cofactor>
    <text evidence="1">May bind 1 zinc ion per subunit.</text>
</comment>
<comment type="subunit">
    <text evidence="1">Monomer and homodimer. Part of the essential Sec protein translocation apparatus which comprises SecA, SecYEG and auxiliary proteins SecDF-YajC and YidC.</text>
</comment>
<comment type="subcellular location">
    <subcellularLocation>
        <location evidence="1">Cell inner membrane</location>
        <topology evidence="1">Peripheral membrane protein</topology>
        <orientation evidence="1">Cytoplasmic side</orientation>
    </subcellularLocation>
    <subcellularLocation>
        <location evidence="1">Cytoplasm</location>
    </subcellularLocation>
    <text evidence="1">Distribution is 50-50.</text>
</comment>
<comment type="similarity">
    <text evidence="1">Belongs to the SecA family.</text>
</comment>
<protein>
    <recommendedName>
        <fullName evidence="1">Protein translocase subunit SecA</fullName>
        <ecNumber evidence="1">7.4.2.8</ecNumber>
    </recommendedName>
</protein>
<gene>
    <name evidence="1" type="primary">secA</name>
    <name type="ordered locus">PA4403</name>
</gene>
<organism>
    <name type="scientific">Pseudomonas aeruginosa (strain ATCC 15692 / DSM 22644 / CIP 104116 / JCM 14847 / LMG 12228 / 1C / PRS 101 / PAO1)</name>
    <dbReference type="NCBI Taxonomy" id="208964"/>
    <lineage>
        <taxon>Bacteria</taxon>
        <taxon>Pseudomonadati</taxon>
        <taxon>Pseudomonadota</taxon>
        <taxon>Gammaproteobacteria</taxon>
        <taxon>Pseudomonadales</taxon>
        <taxon>Pseudomonadaceae</taxon>
        <taxon>Pseudomonas</taxon>
    </lineage>
</organism>
<dbReference type="EC" id="7.4.2.8" evidence="1"/>
<dbReference type="EMBL" id="U19797">
    <property type="protein sequence ID" value="AAF26459.1"/>
    <property type="molecule type" value="Genomic_DNA"/>
</dbReference>
<dbReference type="EMBL" id="AE004091">
    <property type="protein sequence ID" value="AAG07791.1"/>
    <property type="molecule type" value="Genomic_DNA"/>
</dbReference>
<dbReference type="PIR" id="D83093">
    <property type="entry name" value="D83093"/>
</dbReference>
<dbReference type="RefSeq" id="NP_253093.1">
    <property type="nucleotide sequence ID" value="NC_002516.2"/>
</dbReference>
<dbReference type="RefSeq" id="WP_003112752.1">
    <property type="nucleotide sequence ID" value="NZ_QZGE01000004.1"/>
</dbReference>
<dbReference type="SMR" id="Q9LCT3"/>
<dbReference type="FunCoup" id="Q9LCT3">
    <property type="interactions" value="761"/>
</dbReference>
<dbReference type="STRING" id="208964.PA4403"/>
<dbReference type="PaxDb" id="208964-PA4403"/>
<dbReference type="GeneID" id="881307"/>
<dbReference type="KEGG" id="pae:PA4403"/>
<dbReference type="PATRIC" id="fig|208964.12.peg.4611"/>
<dbReference type="PseudoCAP" id="PA4403"/>
<dbReference type="HOGENOM" id="CLU_005314_3_0_6"/>
<dbReference type="InParanoid" id="Q9LCT3"/>
<dbReference type="OrthoDB" id="9805579at2"/>
<dbReference type="PhylomeDB" id="Q9LCT3"/>
<dbReference type="BioCyc" id="PAER208964:G1FZ6-4489-MONOMER"/>
<dbReference type="BRENDA" id="7.4.2.5">
    <property type="organism ID" value="5087"/>
</dbReference>
<dbReference type="Proteomes" id="UP000002438">
    <property type="component" value="Chromosome"/>
</dbReference>
<dbReference type="GO" id="GO:0031522">
    <property type="term" value="C:cell envelope Sec protein transport complex"/>
    <property type="evidence" value="ECO:0000318"/>
    <property type="project" value="GO_Central"/>
</dbReference>
<dbReference type="GO" id="GO:0005737">
    <property type="term" value="C:cytoplasm"/>
    <property type="evidence" value="ECO:0007669"/>
    <property type="project" value="UniProtKB-SubCell"/>
</dbReference>
<dbReference type="GO" id="GO:0005886">
    <property type="term" value="C:plasma membrane"/>
    <property type="evidence" value="ECO:0000318"/>
    <property type="project" value="GO_Central"/>
</dbReference>
<dbReference type="GO" id="GO:0005524">
    <property type="term" value="F:ATP binding"/>
    <property type="evidence" value="ECO:0000318"/>
    <property type="project" value="GO_Central"/>
</dbReference>
<dbReference type="GO" id="GO:0046872">
    <property type="term" value="F:metal ion binding"/>
    <property type="evidence" value="ECO:0007669"/>
    <property type="project" value="UniProtKB-KW"/>
</dbReference>
<dbReference type="GO" id="GO:0008564">
    <property type="term" value="F:protein-exporting ATPase activity"/>
    <property type="evidence" value="ECO:0007669"/>
    <property type="project" value="UniProtKB-EC"/>
</dbReference>
<dbReference type="GO" id="GO:0065002">
    <property type="term" value="P:intracellular protein transmembrane transport"/>
    <property type="evidence" value="ECO:0007669"/>
    <property type="project" value="UniProtKB-UniRule"/>
</dbReference>
<dbReference type="GO" id="GO:0017038">
    <property type="term" value="P:protein import"/>
    <property type="evidence" value="ECO:0007669"/>
    <property type="project" value="InterPro"/>
</dbReference>
<dbReference type="GO" id="GO:0006605">
    <property type="term" value="P:protein targeting"/>
    <property type="evidence" value="ECO:0007669"/>
    <property type="project" value="UniProtKB-UniRule"/>
</dbReference>
<dbReference type="GO" id="GO:0043952">
    <property type="term" value="P:protein transport by the Sec complex"/>
    <property type="evidence" value="ECO:0000318"/>
    <property type="project" value="GO_Central"/>
</dbReference>
<dbReference type="CDD" id="cd17928">
    <property type="entry name" value="DEXDc_SecA"/>
    <property type="match status" value="1"/>
</dbReference>
<dbReference type="CDD" id="cd18803">
    <property type="entry name" value="SF2_C_secA"/>
    <property type="match status" value="1"/>
</dbReference>
<dbReference type="FunFam" id="1.10.3060.10:FF:000001">
    <property type="entry name" value="Preprotein translocase subunit SecA"/>
    <property type="match status" value="1"/>
</dbReference>
<dbReference type="FunFam" id="3.40.50.300:FF:000081">
    <property type="entry name" value="Preprotein translocase subunit SecA"/>
    <property type="match status" value="1"/>
</dbReference>
<dbReference type="FunFam" id="3.40.50.300:FF:000113">
    <property type="entry name" value="Preprotein translocase subunit SecA"/>
    <property type="match status" value="1"/>
</dbReference>
<dbReference type="FunFam" id="3.90.1440.10:FF:000001">
    <property type="entry name" value="Preprotein translocase subunit SecA"/>
    <property type="match status" value="1"/>
</dbReference>
<dbReference type="Gene3D" id="1.10.3060.10">
    <property type="entry name" value="Helical scaffold and wing domains of SecA"/>
    <property type="match status" value="1"/>
</dbReference>
<dbReference type="Gene3D" id="3.40.50.300">
    <property type="entry name" value="P-loop containing nucleotide triphosphate hydrolases"/>
    <property type="match status" value="2"/>
</dbReference>
<dbReference type="Gene3D" id="3.90.1440.10">
    <property type="entry name" value="SecA, preprotein cross-linking domain"/>
    <property type="match status" value="1"/>
</dbReference>
<dbReference type="HAMAP" id="MF_01382">
    <property type="entry name" value="SecA"/>
    <property type="match status" value="1"/>
</dbReference>
<dbReference type="InterPro" id="IPR014001">
    <property type="entry name" value="Helicase_ATP-bd"/>
</dbReference>
<dbReference type="InterPro" id="IPR001650">
    <property type="entry name" value="Helicase_C-like"/>
</dbReference>
<dbReference type="InterPro" id="IPR027417">
    <property type="entry name" value="P-loop_NTPase"/>
</dbReference>
<dbReference type="InterPro" id="IPR004027">
    <property type="entry name" value="SEC_C_motif"/>
</dbReference>
<dbReference type="InterPro" id="IPR000185">
    <property type="entry name" value="SecA"/>
</dbReference>
<dbReference type="InterPro" id="IPR020937">
    <property type="entry name" value="SecA_CS"/>
</dbReference>
<dbReference type="InterPro" id="IPR011115">
    <property type="entry name" value="SecA_DEAD"/>
</dbReference>
<dbReference type="InterPro" id="IPR014018">
    <property type="entry name" value="SecA_motor_DEAD"/>
</dbReference>
<dbReference type="InterPro" id="IPR011130">
    <property type="entry name" value="SecA_preprotein_X-link_dom"/>
</dbReference>
<dbReference type="InterPro" id="IPR044722">
    <property type="entry name" value="SecA_SF2_C"/>
</dbReference>
<dbReference type="InterPro" id="IPR011116">
    <property type="entry name" value="SecA_Wing/Scaffold"/>
</dbReference>
<dbReference type="InterPro" id="IPR036266">
    <property type="entry name" value="SecA_Wing/Scaffold_sf"/>
</dbReference>
<dbReference type="InterPro" id="IPR036670">
    <property type="entry name" value="SecA_X-link_sf"/>
</dbReference>
<dbReference type="NCBIfam" id="NF009538">
    <property type="entry name" value="PRK12904.1"/>
    <property type="match status" value="1"/>
</dbReference>
<dbReference type="NCBIfam" id="TIGR00963">
    <property type="entry name" value="secA"/>
    <property type="match status" value="1"/>
</dbReference>
<dbReference type="PANTHER" id="PTHR30612:SF0">
    <property type="entry name" value="CHLOROPLAST PROTEIN-TRANSPORTING ATPASE"/>
    <property type="match status" value="1"/>
</dbReference>
<dbReference type="PANTHER" id="PTHR30612">
    <property type="entry name" value="SECA INNER MEMBRANE COMPONENT OF SEC PROTEIN SECRETION SYSTEM"/>
    <property type="match status" value="1"/>
</dbReference>
<dbReference type="Pfam" id="PF21090">
    <property type="entry name" value="P-loop_SecA"/>
    <property type="match status" value="1"/>
</dbReference>
<dbReference type="Pfam" id="PF02810">
    <property type="entry name" value="SEC-C"/>
    <property type="match status" value="1"/>
</dbReference>
<dbReference type="Pfam" id="PF07517">
    <property type="entry name" value="SecA_DEAD"/>
    <property type="match status" value="1"/>
</dbReference>
<dbReference type="Pfam" id="PF01043">
    <property type="entry name" value="SecA_PP_bind"/>
    <property type="match status" value="1"/>
</dbReference>
<dbReference type="Pfam" id="PF07516">
    <property type="entry name" value="SecA_SW"/>
    <property type="match status" value="1"/>
</dbReference>
<dbReference type="PRINTS" id="PR00906">
    <property type="entry name" value="SECA"/>
</dbReference>
<dbReference type="SMART" id="SM00957">
    <property type="entry name" value="SecA_DEAD"/>
    <property type="match status" value="1"/>
</dbReference>
<dbReference type="SMART" id="SM00958">
    <property type="entry name" value="SecA_PP_bind"/>
    <property type="match status" value="1"/>
</dbReference>
<dbReference type="SUPFAM" id="SSF81886">
    <property type="entry name" value="Helical scaffold and wing domains of SecA"/>
    <property type="match status" value="1"/>
</dbReference>
<dbReference type="SUPFAM" id="SSF52540">
    <property type="entry name" value="P-loop containing nucleoside triphosphate hydrolases"/>
    <property type="match status" value="2"/>
</dbReference>
<dbReference type="SUPFAM" id="SSF81767">
    <property type="entry name" value="Pre-protein crosslinking domain of SecA"/>
    <property type="match status" value="1"/>
</dbReference>
<dbReference type="PROSITE" id="PS01312">
    <property type="entry name" value="SECA"/>
    <property type="match status" value="1"/>
</dbReference>
<dbReference type="PROSITE" id="PS51196">
    <property type="entry name" value="SECA_MOTOR_DEAD"/>
    <property type="match status" value="1"/>
</dbReference>
<feature type="chain" id="PRO_0000287812" description="Protein translocase subunit SecA">
    <location>
        <begin position="1"/>
        <end position="916"/>
    </location>
</feature>
<feature type="region of interest" description="Disordered" evidence="2">
    <location>
        <begin position="857"/>
        <end position="916"/>
    </location>
</feature>
<feature type="compositionally biased region" description="Basic residues" evidence="2">
    <location>
        <begin position="906"/>
        <end position="916"/>
    </location>
</feature>
<feature type="binding site" evidence="1">
    <location>
        <position position="87"/>
    </location>
    <ligand>
        <name>ATP</name>
        <dbReference type="ChEBI" id="CHEBI:30616"/>
    </ligand>
</feature>
<feature type="binding site" evidence="1">
    <location>
        <begin position="105"/>
        <end position="109"/>
    </location>
    <ligand>
        <name>ATP</name>
        <dbReference type="ChEBI" id="CHEBI:30616"/>
    </ligand>
</feature>
<feature type="binding site" evidence="1">
    <location>
        <position position="512"/>
    </location>
    <ligand>
        <name>ATP</name>
        <dbReference type="ChEBI" id="CHEBI:30616"/>
    </ligand>
</feature>
<feature type="binding site" evidence="1">
    <location>
        <position position="900"/>
    </location>
    <ligand>
        <name>Zn(2+)</name>
        <dbReference type="ChEBI" id="CHEBI:29105"/>
    </ligand>
</feature>
<feature type="binding site" evidence="1">
    <location>
        <position position="902"/>
    </location>
    <ligand>
        <name>Zn(2+)</name>
        <dbReference type="ChEBI" id="CHEBI:29105"/>
    </ligand>
</feature>
<feature type="binding site" evidence="1">
    <location>
        <position position="911"/>
    </location>
    <ligand>
        <name>Zn(2+)</name>
        <dbReference type="ChEBI" id="CHEBI:29105"/>
    </ligand>
</feature>
<feature type="binding site" evidence="1">
    <location>
        <position position="912"/>
    </location>
    <ligand>
        <name>Zn(2+)</name>
        <dbReference type="ChEBI" id="CHEBI:29105"/>
    </ligand>
</feature>
<evidence type="ECO:0000255" key="1">
    <source>
        <dbReference type="HAMAP-Rule" id="MF_01382"/>
    </source>
</evidence>
<evidence type="ECO:0000256" key="2">
    <source>
        <dbReference type="SAM" id="MobiDB-lite"/>
    </source>
</evidence>
<sequence>MFAPLLKKLFGSKNERDVKRMAKAVQAINALEPQMVALSDEQLKAKTAEFQQRYAKGETLDQLLPEAFAVVREAGKRVMGMRHFDVQLIGGMTLHDGKIAEMRTGEGKTLVGTLPVYLNALSGKGVHVVTVNDYLARRDANWMRPLYEFLGLSVGVVTPFQPPEDKRAAYAADITYGTNNEFGFDYLRDNMAFSLDDKFQRELNFAVVDEVDSILIDEARTPLIISGQAEDSSELYIKINKLIPRLKRQVEEVEGKPTEEGHYSIDEKTRQVELNEQGHQFIEDLLSQNGLLGEGESLYSAHNLSLLTHVYAALRAHTLFHRNVEYIVQGDQILLIDEHTGRTMPGRRLSEGLHQAIEAKEGLPIQAESQTLASTTFQNYFRLYNKLAGMTGTADTEAFEFRQIYGLDVVVIPTHRPIARKDFNDLVYLTQEEKYAAIITDIKQCQALGRPILVGTASIESSEYVSKLLQEAGIEHKVLNAKYHEKEAEIIAQAGAPGSVTIATNMAGRGTDILLGGNWEVEVAALENPTEEQIAQIKAEWQKRHQQVIEAGGLHVIASERHESRRIDNQLRGRAGRQGDPGSSRFYLSLEDNLMRIFASDRVKNFMKALGMQSGEAIEHRMVTNAIEKAQRKVEGRNFDIRKQLLEFDDVANEQRKVIYHMRNTLLSAEDVGETIKEFREETLSATINQHIPPQSLPEQWDIEGLEAALYSDFAVRLPIQQWLDEDDKLYEETLRSKILEQIVAAYYEKEELAGAEALRAFEKQMLLRVLDDLWKDHLSTMDHLRHGIHLRGYAQKNPKQEYKRESFTLFQELLDSIKRDTIRVLSHVQVRREDPAEEEARLRREAEELAKRMQFQHAEAPSMEQAVAGEEEELPEGPAPVVPLEPVRNEQKIGRNEPCPCGSGKKYKHCHGQLD</sequence>
<reference key="1">
    <citation type="submission" date="2000-01" db="EMBL/GenBank/DDBJ databases">
        <title>Physical mapping of 38 loci including aimE, ampC, ampR, arcA, aroK, catR, cypH, dapB, envA, envC, ftsA, ftsZ, groEL, murE, opdE, oprD, oprF, oprH, oprI, oprK, oprP, pbpB, pbpC, pheS, phoA, phoB, phoS, ponA, pyoS1, qin, rpoB, rpoH, sodB, soxR, sucC.</title>
        <authorList>
            <person name="Levesque R.C."/>
            <person name="Liao X."/>
            <person name="Lightfoot J."/>
            <person name="Charlebois I."/>
            <person name="Ouellet C."/>
            <person name="Morency M."/>
            <person name="Dewar K."/>
            <person name="Siehnel R."/>
            <person name="Lam J."/>
            <person name="Hancock R.E."/>
        </authorList>
    </citation>
    <scope>NUCLEOTIDE SEQUENCE [GENOMIC DNA]</scope>
    <source>
        <strain>ATCC 15692 / DSM 22644 / CIP 104116 / JCM 14847 / LMG 12228 / 1C / PRS 101 / PAO1</strain>
    </source>
</reference>
<reference key="2">
    <citation type="journal article" date="2000" name="Nature">
        <title>Complete genome sequence of Pseudomonas aeruginosa PAO1, an opportunistic pathogen.</title>
        <authorList>
            <person name="Stover C.K."/>
            <person name="Pham X.-Q.T."/>
            <person name="Erwin A.L."/>
            <person name="Mizoguchi S.D."/>
            <person name="Warrener P."/>
            <person name="Hickey M.J."/>
            <person name="Brinkman F.S.L."/>
            <person name="Hufnagle W.O."/>
            <person name="Kowalik D.J."/>
            <person name="Lagrou M."/>
            <person name="Garber R.L."/>
            <person name="Goltry L."/>
            <person name="Tolentino E."/>
            <person name="Westbrock-Wadman S."/>
            <person name="Yuan Y."/>
            <person name="Brody L.L."/>
            <person name="Coulter S.N."/>
            <person name="Folger K.R."/>
            <person name="Kas A."/>
            <person name="Larbig K."/>
            <person name="Lim R.M."/>
            <person name="Smith K.A."/>
            <person name="Spencer D.H."/>
            <person name="Wong G.K.-S."/>
            <person name="Wu Z."/>
            <person name="Paulsen I.T."/>
            <person name="Reizer J."/>
            <person name="Saier M.H. Jr."/>
            <person name="Hancock R.E.W."/>
            <person name="Lory S."/>
            <person name="Olson M.V."/>
        </authorList>
    </citation>
    <scope>NUCLEOTIDE SEQUENCE [LARGE SCALE GENOMIC DNA]</scope>
    <source>
        <strain>ATCC 15692 / DSM 22644 / CIP 104116 / JCM 14847 / LMG 12228 / 1C / PRS 101 / PAO1</strain>
    </source>
</reference>
<proteinExistence type="inferred from homology"/>
<name>SECA_PSEAE</name>
<keyword id="KW-0067">ATP-binding</keyword>
<keyword id="KW-0997">Cell inner membrane</keyword>
<keyword id="KW-1003">Cell membrane</keyword>
<keyword id="KW-0963">Cytoplasm</keyword>
<keyword id="KW-0472">Membrane</keyword>
<keyword id="KW-0479">Metal-binding</keyword>
<keyword id="KW-0547">Nucleotide-binding</keyword>
<keyword id="KW-0653">Protein transport</keyword>
<keyword id="KW-1185">Reference proteome</keyword>
<keyword id="KW-1278">Translocase</keyword>
<keyword id="KW-0811">Translocation</keyword>
<keyword id="KW-0813">Transport</keyword>
<keyword id="KW-0862">Zinc</keyword>
<accession>Q9LCT3</accession>
<accession>Q7DC74</accession>